<sequence>MSASGLPFDDFRELIRNLPGPDLGAERAVREREATLTKPAGSLGRMEDIVAWLAAWTGKRTPQINRPLVAVFAGNHGVTAKNITPFPPSVTAQMVENFAAGGAAINQICIANDLGLKVFDLALEHPTGDITEEPAMDERTCAATMAFGMEAIAGGTDLLCIGEMGIGNTTIAAAIALALFGGTAEDWVGPGTGSTGELLQRKLAAVRQAVALHQAHLQDPLEVLSRLGGREIAAMAGAILAARMEKIPVIVDGFVASAAAAVLYAANPEAIDHCLFGHVSAEPGHRKLLEKMGKQPLLDMGMRLGEGTGAALAASIVKAAALCHSGMATFEQAGISGSK</sequence>
<protein>
    <recommendedName>
        <fullName evidence="1">Nicotinate-nucleotide--dimethylbenzimidazole phosphoribosyltransferase</fullName>
        <shortName evidence="1">NN:DBI PRT</shortName>
        <ecNumber evidence="1">2.4.2.21</ecNumber>
    </recommendedName>
    <alternativeName>
        <fullName evidence="1">N(1)-alpha-phosphoribosyltransferase</fullName>
    </alternativeName>
</protein>
<keyword id="KW-0169">Cobalamin biosynthesis</keyword>
<keyword id="KW-0328">Glycosyltransferase</keyword>
<keyword id="KW-1185">Reference proteome</keyword>
<keyword id="KW-0808">Transferase</keyword>
<name>COBT_BRUA4</name>
<dbReference type="EC" id="2.4.2.21" evidence="1"/>
<dbReference type="EMBL" id="CP000758">
    <property type="protein sequence ID" value="ABS15074.1"/>
    <property type="molecule type" value="Genomic_DNA"/>
</dbReference>
<dbReference type="RefSeq" id="WP_012092222.1">
    <property type="nucleotide sequence ID" value="NC_009667.1"/>
</dbReference>
<dbReference type="SMR" id="A6X1H0"/>
<dbReference type="STRING" id="439375.Oant_2360"/>
<dbReference type="KEGG" id="oan:Oant_2360"/>
<dbReference type="PATRIC" id="fig|439375.7.peg.2490"/>
<dbReference type="eggNOG" id="COG2038">
    <property type="taxonomic scope" value="Bacteria"/>
</dbReference>
<dbReference type="HOGENOM" id="CLU_002982_0_1_5"/>
<dbReference type="PhylomeDB" id="A6X1H0"/>
<dbReference type="UniPathway" id="UPA00061">
    <property type="reaction ID" value="UER00516"/>
</dbReference>
<dbReference type="Proteomes" id="UP000002301">
    <property type="component" value="Chromosome 1"/>
</dbReference>
<dbReference type="GO" id="GO:0008939">
    <property type="term" value="F:nicotinate-nucleotide-dimethylbenzimidazole phosphoribosyltransferase activity"/>
    <property type="evidence" value="ECO:0007669"/>
    <property type="project" value="UniProtKB-UniRule"/>
</dbReference>
<dbReference type="GO" id="GO:0009236">
    <property type="term" value="P:cobalamin biosynthetic process"/>
    <property type="evidence" value="ECO:0007669"/>
    <property type="project" value="UniProtKB-KW"/>
</dbReference>
<dbReference type="CDD" id="cd02439">
    <property type="entry name" value="DMB-PRT_CobT"/>
    <property type="match status" value="1"/>
</dbReference>
<dbReference type="Gene3D" id="1.10.1610.10">
    <property type="match status" value="1"/>
</dbReference>
<dbReference type="Gene3D" id="3.40.50.10210">
    <property type="match status" value="1"/>
</dbReference>
<dbReference type="HAMAP" id="MF_00230">
    <property type="entry name" value="CobT"/>
    <property type="match status" value="1"/>
</dbReference>
<dbReference type="InterPro" id="IPR003200">
    <property type="entry name" value="Nict_dMeBzImd_PRibTrfase"/>
</dbReference>
<dbReference type="InterPro" id="IPR017846">
    <property type="entry name" value="Nict_dMeBzImd_PRibTrfase_bact"/>
</dbReference>
<dbReference type="InterPro" id="IPR023195">
    <property type="entry name" value="Nict_dMeBzImd_PRibTrfase_N"/>
</dbReference>
<dbReference type="InterPro" id="IPR036087">
    <property type="entry name" value="Nict_dMeBzImd_PRibTrfase_sf"/>
</dbReference>
<dbReference type="NCBIfam" id="TIGR03160">
    <property type="entry name" value="cobT_DBIPRT"/>
    <property type="match status" value="1"/>
</dbReference>
<dbReference type="NCBIfam" id="NF000996">
    <property type="entry name" value="PRK00105.1"/>
    <property type="match status" value="1"/>
</dbReference>
<dbReference type="PANTHER" id="PTHR43463">
    <property type="entry name" value="NICOTINATE-NUCLEOTIDE--DIMETHYLBENZIMIDAZOLE PHOSPHORIBOSYLTRANSFERASE"/>
    <property type="match status" value="1"/>
</dbReference>
<dbReference type="PANTHER" id="PTHR43463:SF1">
    <property type="entry name" value="NICOTINATE-NUCLEOTIDE--DIMETHYLBENZIMIDAZOLE PHOSPHORIBOSYLTRANSFERASE"/>
    <property type="match status" value="1"/>
</dbReference>
<dbReference type="Pfam" id="PF02277">
    <property type="entry name" value="DBI_PRT"/>
    <property type="match status" value="1"/>
</dbReference>
<dbReference type="SUPFAM" id="SSF52733">
    <property type="entry name" value="Nicotinate mononucleotide:5,6-dimethylbenzimidazole phosphoribosyltransferase (CobT)"/>
    <property type="match status" value="1"/>
</dbReference>
<organism>
    <name type="scientific">Brucella anthropi (strain ATCC 49188 / DSM 6882 / CCUG 24695 / JCM 21032 / LMG 3331 / NBRC 15819 / NCTC 12168 / Alc 37)</name>
    <name type="common">Ochrobactrum anthropi</name>
    <dbReference type="NCBI Taxonomy" id="439375"/>
    <lineage>
        <taxon>Bacteria</taxon>
        <taxon>Pseudomonadati</taxon>
        <taxon>Pseudomonadota</taxon>
        <taxon>Alphaproteobacteria</taxon>
        <taxon>Hyphomicrobiales</taxon>
        <taxon>Brucellaceae</taxon>
        <taxon>Brucella/Ochrobactrum group</taxon>
        <taxon>Brucella</taxon>
    </lineage>
</organism>
<evidence type="ECO:0000255" key="1">
    <source>
        <dbReference type="HAMAP-Rule" id="MF_00230"/>
    </source>
</evidence>
<feature type="chain" id="PRO_1000021607" description="Nicotinate-nucleotide--dimethylbenzimidazole phosphoribosyltransferase">
    <location>
        <begin position="1"/>
        <end position="339"/>
    </location>
</feature>
<feature type="active site" description="Proton acceptor" evidence="1">
    <location>
        <position position="306"/>
    </location>
</feature>
<reference key="1">
    <citation type="journal article" date="2011" name="J. Bacteriol.">
        <title>Genome of Ochrobactrum anthropi ATCC 49188 T, a versatile opportunistic pathogen and symbiont of several eukaryotic hosts.</title>
        <authorList>
            <person name="Chain P.S."/>
            <person name="Lang D.M."/>
            <person name="Comerci D.J."/>
            <person name="Malfatti S.A."/>
            <person name="Vergez L.M."/>
            <person name="Shin M."/>
            <person name="Ugalde R.A."/>
            <person name="Garcia E."/>
            <person name="Tolmasky M.E."/>
        </authorList>
    </citation>
    <scope>NUCLEOTIDE SEQUENCE [LARGE SCALE GENOMIC DNA]</scope>
    <source>
        <strain>ATCC 49188 / DSM 6882 / CCUG 24695 / JCM 21032 / LMG 3331 / NBRC 15819 / NCTC 12168 / Alc 37</strain>
    </source>
</reference>
<gene>
    <name evidence="1" type="primary">cobT</name>
    <name type="ordered locus">Oant_2360</name>
</gene>
<accession>A6X1H0</accession>
<proteinExistence type="inferred from homology"/>
<comment type="function">
    <text evidence="1">Catalyzes the synthesis of alpha-ribazole-5'-phosphate from nicotinate mononucleotide (NAMN) and 5,6-dimethylbenzimidazole (DMB).</text>
</comment>
<comment type="catalytic activity">
    <reaction evidence="1">
        <text>5,6-dimethylbenzimidazole + nicotinate beta-D-ribonucleotide = alpha-ribazole 5'-phosphate + nicotinate + H(+)</text>
        <dbReference type="Rhea" id="RHEA:11196"/>
        <dbReference type="ChEBI" id="CHEBI:15378"/>
        <dbReference type="ChEBI" id="CHEBI:15890"/>
        <dbReference type="ChEBI" id="CHEBI:32544"/>
        <dbReference type="ChEBI" id="CHEBI:57502"/>
        <dbReference type="ChEBI" id="CHEBI:57918"/>
        <dbReference type="EC" id="2.4.2.21"/>
    </reaction>
</comment>
<comment type="pathway">
    <text evidence="1">Nucleoside biosynthesis; alpha-ribazole biosynthesis; alpha-ribazole from 5,6-dimethylbenzimidazole: step 1/2.</text>
</comment>
<comment type="similarity">
    <text evidence="1">Belongs to the CobT family.</text>
</comment>